<keyword id="KW-0067">ATP-binding</keyword>
<keyword id="KW-0143">Chaperone</keyword>
<keyword id="KW-0547">Nucleotide-binding</keyword>
<keyword id="KW-1185">Reference proteome</keyword>
<gene>
    <name type="primary">hscA</name>
    <name type="ordered locus">PA3810</name>
</gene>
<dbReference type="EMBL" id="AE004091">
    <property type="protein sequence ID" value="AAG07197.1"/>
    <property type="molecule type" value="Genomic_DNA"/>
</dbReference>
<dbReference type="EMBL" id="U41267">
    <property type="protein sequence ID" value="AAC44151.1"/>
    <property type="molecule type" value="Genomic_DNA"/>
</dbReference>
<dbReference type="PIR" id="C83168">
    <property type="entry name" value="C83168"/>
</dbReference>
<dbReference type="PIR" id="S77590">
    <property type="entry name" value="S77590"/>
</dbReference>
<dbReference type="RefSeq" id="NP_252499.1">
    <property type="nucleotide sequence ID" value="NC_002516.2"/>
</dbReference>
<dbReference type="RefSeq" id="WP_003100622.1">
    <property type="nucleotide sequence ID" value="NZ_QZGE01000001.1"/>
</dbReference>
<dbReference type="SMR" id="Q51382"/>
<dbReference type="FunCoup" id="Q51382">
    <property type="interactions" value="121"/>
</dbReference>
<dbReference type="STRING" id="208964.PA3810"/>
<dbReference type="PaxDb" id="208964-PA3810"/>
<dbReference type="GeneID" id="879936"/>
<dbReference type="KEGG" id="pae:PA3810"/>
<dbReference type="PATRIC" id="fig|208964.12.peg.3989"/>
<dbReference type="PseudoCAP" id="PA3810"/>
<dbReference type="HOGENOM" id="CLU_005965_2_1_6"/>
<dbReference type="InParanoid" id="Q51382"/>
<dbReference type="OrthoDB" id="9766019at2"/>
<dbReference type="PhylomeDB" id="Q51382"/>
<dbReference type="BioCyc" id="PAER208964:G1FZ6-3881-MONOMER"/>
<dbReference type="Proteomes" id="UP000002438">
    <property type="component" value="Chromosome"/>
</dbReference>
<dbReference type="GO" id="GO:0005829">
    <property type="term" value="C:cytosol"/>
    <property type="evidence" value="ECO:0000318"/>
    <property type="project" value="GO_Central"/>
</dbReference>
<dbReference type="GO" id="GO:0005524">
    <property type="term" value="F:ATP binding"/>
    <property type="evidence" value="ECO:0007669"/>
    <property type="project" value="UniProtKB-KW"/>
</dbReference>
<dbReference type="GO" id="GO:0016887">
    <property type="term" value="F:ATP hydrolysis activity"/>
    <property type="evidence" value="ECO:0000318"/>
    <property type="project" value="GO_Central"/>
</dbReference>
<dbReference type="GO" id="GO:0140662">
    <property type="term" value="F:ATP-dependent protein folding chaperone"/>
    <property type="evidence" value="ECO:0007669"/>
    <property type="project" value="InterPro"/>
</dbReference>
<dbReference type="GO" id="GO:0031072">
    <property type="term" value="F:heat shock protein binding"/>
    <property type="evidence" value="ECO:0000318"/>
    <property type="project" value="GO_Central"/>
</dbReference>
<dbReference type="GO" id="GO:0044183">
    <property type="term" value="F:protein folding chaperone"/>
    <property type="evidence" value="ECO:0000318"/>
    <property type="project" value="GO_Central"/>
</dbReference>
<dbReference type="GO" id="GO:0051082">
    <property type="term" value="F:unfolded protein binding"/>
    <property type="evidence" value="ECO:0007669"/>
    <property type="project" value="InterPro"/>
</dbReference>
<dbReference type="GO" id="GO:0051085">
    <property type="term" value="P:chaperone cofactor-dependent protein refolding"/>
    <property type="evidence" value="ECO:0000318"/>
    <property type="project" value="GO_Central"/>
</dbReference>
<dbReference type="GO" id="GO:0016226">
    <property type="term" value="P:iron-sulfur cluster assembly"/>
    <property type="evidence" value="ECO:0007669"/>
    <property type="project" value="InterPro"/>
</dbReference>
<dbReference type="GO" id="GO:0042026">
    <property type="term" value="P:protein refolding"/>
    <property type="evidence" value="ECO:0000318"/>
    <property type="project" value="GO_Central"/>
</dbReference>
<dbReference type="CDD" id="cd10236">
    <property type="entry name" value="ASKHA_NBD_HSP70_HscA"/>
    <property type="match status" value="1"/>
</dbReference>
<dbReference type="FunFam" id="3.30.420.40:FF:000046">
    <property type="entry name" value="Chaperone protein HscA"/>
    <property type="match status" value="1"/>
</dbReference>
<dbReference type="FunFam" id="2.60.34.10:FF:000005">
    <property type="entry name" value="Chaperone protein HscA homolog"/>
    <property type="match status" value="1"/>
</dbReference>
<dbReference type="Gene3D" id="1.20.1270.10">
    <property type="match status" value="1"/>
</dbReference>
<dbReference type="Gene3D" id="3.30.420.40">
    <property type="match status" value="2"/>
</dbReference>
<dbReference type="Gene3D" id="3.90.640.10">
    <property type="entry name" value="Actin, Chain A, domain 4"/>
    <property type="match status" value="1"/>
</dbReference>
<dbReference type="Gene3D" id="2.60.34.10">
    <property type="entry name" value="Substrate Binding Domain Of DNAk, Chain A, domain 1"/>
    <property type="match status" value="1"/>
</dbReference>
<dbReference type="HAMAP" id="MF_00679">
    <property type="entry name" value="HscA"/>
    <property type="match status" value="1"/>
</dbReference>
<dbReference type="InterPro" id="IPR043129">
    <property type="entry name" value="ATPase_NBD"/>
</dbReference>
<dbReference type="InterPro" id="IPR018181">
    <property type="entry name" value="Heat_shock_70_CS"/>
</dbReference>
<dbReference type="InterPro" id="IPR042039">
    <property type="entry name" value="HscA_NBD"/>
</dbReference>
<dbReference type="InterPro" id="IPR029048">
    <property type="entry name" value="HSP70_C_sf"/>
</dbReference>
<dbReference type="InterPro" id="IPR029047">
    <property type="entry name" value="HSP70_peptide-bd_sf"/>
</dbReference>
<dbReference type="InterPro" id="IPR013126">
    <property type="entry name" value="Hsp_70_fam"/>
</dbReference>
<dbReference type="InterPro" id="IPR010236">
    <property type="entry name" value="ISC_FeS_clus_asmbl_HscA"/>
</dbReference>
<dbReference type="NCBIfam" id="TIGR01991">
    <property type="entry name" value="HscA"/>
    <property type="match status" value="1"/>
</dbReference>
<dbReference type="NCBIfam" id="NF003520">
    <property type="entry name" value="PRK05183.1"/>
    <property type="match status" value="1"/>
</dbReference>
<dbReference type="PANTHER" id="PTHR19375">
    <property type="entry name" value="HEAT SHOCK PROTEIN 70KDA"/>
    <property type="match status" value="1"/>
</dbReference>
<dbReference type="Pfam" id="PF00012">
    <property type="entry name" value="HSP70"/>
    <property type="match status" value="1"/>
</dbReference>
<dbReference type="PRINTS" id="PR00301">
    <property type="entry name" value="HEATSHOCK70"/>
</dbReference>
<dbReference type="SUPFAM" id="SSF53067">
    <property type="entry name" value="Actin-like ATPase domain"/>
    <property type="match status" value="2"/>
</dbReference>
<dbReference type="SUPFAM" id="SSF100934">
    <property type="entry name" value="Heat shock protein 70kD (HSP70), C-terminal subdomain"/>
    <property type="match status" value="1"/>
</dbReference>
<dbReference type="SUPFAM" id="SSF100920">
    <property type="entry name" value="Heat shock protein 70kD (HSP70), peptide-binding domain"/>
    <property type="match status" value="1"/>
</dbReference>
<dbReference type="PROSITE" id="PS00297">
    <property type="entry name" value="HSP70_1"/>
    <property type="match status" value="1"/>
</dbReference>
<dbReference type="PROSITE" id="PS00329">
    <property type="entry name" value="HSP70_2"/>
    <property type="match status" value="1"/>
</dbReference>
<dbReference type="PROSITE" id="PS01036">
    <property type="entry name" value="HSP70_3"/>
    <property type="match status" value="1"/>
</dbReference>
<accession>Q51382</accession>
<comment type="function">
    <text evidence="1">Chaperone involved in the maturation of iron-sulfur cluster-containing proteins. Has a low intrinsic ATPase activity which is markedly stimulated by HscB (By similarity).</text>
</comment>
<comment type="similarity">
    <text evidence="2">Belongs to the heat shock protein 70 family.</text>
</comment>
<feature type="chain" id="PRO_0000078639" description="Chaperone protein HscA homolog">
    <location>
        <begin position="1"/>
        <end position="619"/>
    </location>
</feature>
<feature type="sequence conflict" description="In Ref. 2; AAC44151." evidence="2" ref="2">
    <original>Q</original>
    <variation>A</variation>
    <location>
        <position position="439"/>
    </location>
</feature>
<proteinExistence type="inferred from homology"/>
<organism>
    <name type="scientific">Pseudomonas aeruginosa (strain ATCC 15692 / DSM 22644 / CIP 104116 / JCM 14847 / LMG 12228 / 1C / PRS 101 / PAO1)</name>
    <dbReference type="NCBI Taxonomy" id="208964"/>
    <lineage>
        <taxon>Bacteria</taxon>
        <taxon>Pseudomonadati</taxon>
        <taxon>Pseudomonadota</taxon>
        <taxon>Gammaproteobacteria</taxon>
        <taxon>Pseudomonadales</taxon>
        <taxon>Pseudomonadaceae</taxon>
        <taxon>Pseudomonas</taxon>
    </lineage>
</organism>
<name>HSCA_PSEAE</name>
<evidence type="ECO:0000250" key="1"/>
<evidence type="ECO:0000305" key="2"/>
<reference key="1">
    <citation type="journal article" date="2000" name="Nature">
        <title>Complete genome sequence of Pseudomonas aeruginosa PAO1, an opportunistic pathogen.</title>
        <authorList>
            <person name="Stover C.K."/>
            <person name="Pham X.-Q.T."/>
            <person name="Erwin A.L."/>
            <person name="Mizoguchi S.D."/>
            <person name="Warrener P."/>
            <person name="Hickey M.J."/>
            <person name="Brinkman F.S.L."/>
            <person name="Hufnagle W.O."/>
            <person name="Kowalik D.J."/>
            <person name="Lagrou M."/>
            <person name="Garber R.L."/>
            <person name="Goltry L."/>
            <person name="Tolentino E."/>
            <person name="Westbrock-Wadman S."/>
            <person name="Yuan Y."/>
            <person name="Brody L.L."/>
            <person name="Coulter S.N."/>
            <person name="Folger K.R."/>
            <person name="Kas A."/>
            <person name="Larbig K."/>
            <person name="Lim R.M."/>
            <person name="Smith K.A."/>
            <person name="Spencer D.H."/>
            <person name="Wong G.K.-S."/>
            <person name="Wu Z."/>
            <person name="Paulsen I.T."/>
            <person name="Reizer J."/>
            <person name="Saier M.H. Jr."/>
            <person name="Hancock R.E.W."/>
            <person name="Lory S."/>
            <person name="Olson M.V."/>
        </authorList>
    </citation>
    <scope>NUCLEOTIDE SEQUENCE [LARGE SCALE GENOMIC DNA]</scope>
    <source>
        <strain>ATCC 15692 / DSM 22644 / CIP 104116 / JCM 14847 / LMG 12228 / 1C / PRS 101 / PAO1</strain>
    </source>
</reference>
<reference key="2">
    <citation type="journal article" date="1996" name="Mol. Microbiol.">
        <title>Nucleoside diphosphate kinase from Pseudomonas aeruginosa: characterization of the gene and its role in cellular growth and exopolysaccharide alginate synthesis.</title>
        <authorList>
            <person name="Sundin G.W."/>
            <person name="Shankar S."/>
            <person name="Chugani S.A."/>
            <person name="Chopade B."/>
            <person name="Kavanaugh-Black A."/>
            <person name="Chakrabarty A.M."/>
        </authorList>
    </citation>
    <scope>NUCLEOTIDE SEQUENCE [GENOMIC DNA] OF 439-619</scope>
    <source>
        <strain>8822</strain>
    </source>
</reference>
<sequence>MALLQIAEPGQSPKPHERRLAVGIDLGTTNSLVAAVRSGVAEPLPDAQGRLILPSAVRYHAERAEVGESARAAAAEDPFNTVISVKRLMGRGLEDVKQLGEQLPYRFRQGESHMPFIETVQGLKSPVEVSADILRELRQRAETTLGGELVGAVITVPAYFDDAQRQATKDAARLAGLNVLRLLNEPTAAAVAYGLDKGAEGLVAIYDLGGGTFDISILRLTRGVFEVLATGGDTALGGDDFDHAIAGWVIEQAGLSADLDPGSQRQLLQIACAAKERLTDEASVRVAYGDWSGELSRATLDELIEPFVARSLKSCRRAVRDSGVDLEEIRSVVMVGGSTRVPRVRTAVGELFGCEPLTDIDPDQVVAIGAAIQADALAGNKRGEELLLLDVIPLSLGLETMGGLMEKVIPRNTTIPVARAQEFTTYKDGQTAMMIHVLQGERELVKDCRSLARFELRGIPPMVAGAAKIRVTFQVDADGLLGVSARELSSGVEASIQVKPSYGLTDGEIARMLKDSFDYAGDDKAARALREQQVEAQRLLEAVQSALDVDGERLLDEEERLAIAAQMDTLRELAGGSDTAAIENQIKRLSQVTDAFAARRMDATVKAALSGRRLNEIEE</sequence>
<protein>
    <recommendedName>
        <fullName>Chaperone protein HscA homolog</fullName>
    </recommendedName>
</protein>